<evidence type="ECO:0000255" key="1">
    <source>
        <dbReference type="HAMAP-Rule" id="MF_01404"/>
    </source>
</evidence>
<protein>
    <recommendedName>
        <fullName evidence="1">Probable pyruvoyl-dependent arginine decarboxylase</fullName>
        <shortName evidence="1">PvlArgDC</shortName>
        <ecNumber evidence="1">4.1.1.19</ecNumber>
    </recommendedName>
    <component>
        <recommendedName>
            <fullName evidence="1">Pyruvoyl-dependent arginine decarboxylase subunit beta</fullName>
        </recommendedName>
    </component>
    <component>
        <recommendedName>
            <fullName evidence="1">Pyruvoyl-dependent arginine decarboxylase subunit alpha</fullName>
        </recommendedName>
    </component>
</protein>
<dbReference type="EC" id="4.1.1.19" evidence="1"/>
<dbReference type="EMBL" id="CP001101">
    <property type="protein sequence ID" value="ACE04727.1"/>
    <property type="molecule type" value="Genomic_DNA"/>
</dbReference>
<dbReference type="SMR" id="B3ELD9"/>
<dbReference type="STRING" id="331678.Cphamn1_1809"/>
<dbReference type="KEGG" id="cpb:Cphamn1_1809"/>
<dbReference type="eggNOG" id="COG1945">
    <property type="taxonomic scope" value="Bacteria"/>
</dbReference>
<dbReference type="HOGENOM" id="CLU_114389_0_0_10"/>
<dbReference type="OrthoDB" id="9783061at2"/>
<dbReference type="GO" id="GO:0008792">
    <property type="term" value="F:arginine decarboxylase activity"/>
    <property type="evidence" value="ECO:0007669"/>
    <property type="project" value="UniProtKB-UniRule"/>
</dbReference>
<dbReference type="GO" id="GO:0006527">
    <property type="term" value="P:arginine catabolic process"/>
    <property type="evidence" value="ECO:0007669"/>
    <property type="project" value="InterPro"/>
</dbReference>
<dbReference type="Gene3D" id="3.30.60.30">
    <property type="match status" value="1"/>
</dbReference>
<dbReference type="Gene3D" id="3.50.20.10">
    <property type="entry name" value="Pyruvoyl-Dependent Histidine Decarboxylase, subunit B"/>
    <property type="match status" value="1"/>
</dbReference>
<dbReference type="HAMAP" id="MF_01404">
    <property type="entry name" value="PvlArgDC"/>
    <property type="match status" value="1"/>
</dbReference>
<dbReference type="InterPro" id="IPR016104">
    <property type="entry name" value="Pyr-dep_his/arg-deCO2ase"/>
</dbReference>
<dbReference type="InterPro" id="IPR016105">
    <property type="entry name" value="Pyr-dep_his/arg-deCO2ase_sand"/>
</dbReference>
<dbReference type="InterPro" id="IPR002724">
    <property type="entry name" value="Pyruvoyl-dep_arg_deCO2ase"/>
</dbReference>
<dbReference type="NCBIfam" id="TIGR00286">
    <property type="entry name" value="pyruvoyl-dependent arginine decarboxylase"/>
    <property type="match status" value="1"/>
</dbReference>
<dbReference type="PANTHER" id="PTHR40438">
    <property type="entry name" value="PYRUVOYL-DEPENDENT ARGININE DECARBOXYLASE"/>
    <property type="match status" value="1"/>
</dbReference>
<dbReference type="PANTHER" id="PTHR40438:SF1">
    <property type="entry name" value="PYRUVOYL-DEPENDENT ARGININE DECARBOXYLASE"/>
    <property type="match status" value="1"/>
</dbReference>
<dbReference type="Pfam" id="PF01862">
    <property type="entry name" value="PvlArgDC"/>
    <property type="match status" value="1"/>
</dbReference>
<dbReference type="PIRSF" id="PIRSF005216">
    <property type="entry name" value="Pyruvoyl-dep_arg_deCO2ase"/>
    <property type="match status" value="1"/>
</dbReference>
<dbReference type="SFLD" id="SFLDG01170">
    <property type="entry name" value="Pyruvoyl-dependent_arginine_de"/>
    <property type="match status" value="1"/>
</dbReference>
<dbReference type="SFLD" id="SFLDS00055">
    <property type="entry name" value="Pyruvoyl-Dependent_Histidine/A"/>
    <property type="match status" value="1"/>
</dbReference>
<dbReference type="SUPFAM" id="SSF56271">
    <property type="entry name" value="Pyruvoyl-dependent histidine and arginine decarboxylases"/>
    <property type="match status" value="1"/>
</dbReference>
<name>PDAD_CHLPB</name>
<organism>
    <name type="scientific">Chlorobium phaeobacteroides (strain BS1)</name>
    <dbReference type="NCBI Taxonomy" id="331678"/>
    <lineage>
        <taxon>Bacteria</taxon>
        <taxon>Pseudomonadati</taxon>
        <taxon>Chlorobiota</taxon>
        <taxon>Chlorobiia</taxon>
        <taxon>Chlorobiales</taxon>
        <taxon>Chlorobiaceae</taxon>
        <taxon>Chlorobium/Pelodictyon group</taxon>
        <taxon>Chlorobium</taxon>
    </lineage>
</organism>
<accession>B3ELD9</accession>
<keyword id="KW-0210">Decarboxylase</keyword>
<keyword id="KW-0456">Lyase</keyword>
<keyword id="KW-0670">Pyruvate</keyword>
<reference key="1">
    <citation type="submission" date="2008-06" db="EMBL/GenBank/DDBJ databases">
        <title>Complete sequence of Chlorobium phaeobacteroides BS1.</title>
        <authorList>
            <consortium name="US DOE Joint Genome Institute"/>
            <person name="Lucas S."/>
            <person name="Copeland A."/>
            <person name="Lapidus A."/>
            <person name="Glavina del Rio T."/>
            <person name="Dalin E."/>
            <person name="Tice H."/>
            <person name="Bruce D."/>
            <person name="Goodwin L."/>
            <person name="Pitluck S."/>
            <person name="Schmutz J."/>
            <person name="Larimer F."/>
            <person name="Land M."/>
            <person name="Hauser L."/>
            <person name="Kyrpides N."/>
            <person name="Ovchinnikova G."/>
            <person name="Li T."/>
            <person name="Liu Z."/>
            <person name="Zhao F."/>
            <person name="Overmann J."/>
            <person name="Bryant D.A."/>
            <person name="Richardson P."/>
        </authorList>
    </citation>
    <scope>NUCLEOTIDE SEQUENCE [LARGE SCALE GENOMIC DNA]</scope>
    <source>
        <strain>BS1</strain>
    </source>
</reference>
<feature type="chain" id="PRO_1000145464" description="Pyruvoyl-dependent arginine decarboxylase subunit beta" evidence="1">
    <location>
        <begin position="1"/>
        <end position="42"/>
    </location>
</feature>
<feature type="chain" id="PRO_1000145465" description="Pyruvoyl-dependent arginine decarboxylase subunit alpha" evidence="1">
    <location>
        <begin position="43"/>
        <end position="181"/>
    </location>
</feature>
<feature type="site" description="Cleavage (non-hydrolytic)" evidence="1">
    <location>
        <begin position="42"/>
        <end position="43"/>
    </location>
</feature>
<feature type="modified residue" description="Pyruvic acid (Ser)" evidence="1">
    <location>
        <position position="43"/>
    </location>
</feature>
<comment type="catalytic activity">
    <reaction evidence="1">
        <text>L-arginine + H(+) = agmatine + CO2</text>
        <dbReference type="Rhea" id="RHEA:17641"/>
        <dbReference type="ChEBI" id="CHEBI:15378"/>
        <dbReference type="ChEBI" id="CHEBI:16526"/>
        <dbReference type="ChEBI" id="CHEBI:32682"/>
        <dbReference type="ChEBI" id="CHEBI:58145"/>
        <dbReference type="EC" id="4.1.1.19"/>
    </reaction>
</comment>
<comment type="cofactor">
    <cofactor evidence="1">
        <name>pyruvate</name>
        <dbReference type="ChEBI" id="CHEBI:15361"/>
    </cofactor>
    <text evidence="1">Binds 1 pyruvoyl group covalently per subunit.</text>
</comment>
<comment type="similarity">
    <text evidence="1">Belongs to the PdaD family.</text>
</comment>
<sequence length="181" mass="20013">MSFVPEKVFFTKGVGRHKEYLSSFELALRDAKIEKCNLVTVSSIFPPKCERLSVEEGLKRLSPGEITFAVMARNSTNEHNRLIASSIGVALPADESLYGYLSEHHPYGQTSEQSGEYAEDLAATMLATTLGIEFDPNKDWDEREGIYKMSGKIINSFNITQSAEGEDGLWTTVIACAVLLP</sequence>
<proteinExistence type="inferred from homology"/>
<gene>
    <name evidence="1" type="primary">pdaD</name>
    <name type="ordered locus">Cphamn1_1809</name>
</gene>